<feature type="chain" id="PRO_0000258880" description="UPF0301 protein YqgE">
    <location>
        <begin position="1"/>
        <end position="187"/>
    </location>
</feature>
<protein>
    <recommendedName>
        <fullName evidence="1">UPF0301 protein YqgE</fullName>
    </recommendedName>
</protein>
<gene>
    <name evidence="1" type="primary">yqgE</name>
    <name type="ordered locus">SPA2959</name>
</gene>
<evidence type="ECO:0000255" key="1">
    <source>
        <dbReference type="HAMAP-Rule" id="MF_00758"/>
    </source>
</evidence>
<dbReference type="EMBL" id="CP000026">
    <property type="protein sequence ID" value="AAV78797.1"/>
    <property type="molecule type" value="Genomic_DNA"/>
</dbReference>
<dbReference type="RefSeq" id="WP_001053177.1">
    <property type="nucleotide sequence ID" value="NC_006511.1"/>
</dbReference>
<dbReference type="SMR" id="Q5PJJ8"/>
<dbReference type="KEGG" id="spt:SPA2959"/>
<dbReference type="HOGENOM" id="CLU_057596_1_0_6"/>
<dbReference type="Proteomes" id="UP000008185">
    <property type="component" value="Chromosome"/>
</dbReference>
<dbReference type="GO" id="GO:0005829">
    <property type="term" value="C:cytosol"/>
    <property type="evidence" value="ECO:0007669"/>
    <property type="project" value="TreeGrafter"/>
</dbReference>
<dbReference type="FunFam" id="3.30.70.1300:FF:000001">
    <property type="entry name" value="UPF0301 protein YqgE"/>
    <property type="match status" value="1"/>
</dbReference>
<dbReference type="Gene3D" id="3.40.1740.10">
    <property type="entry name" value="VC0467-like"/>
    <property type="match status" value="1"/>
</dbReference>
<dbReference type="Gene3D" id="3.30.70.1300">
    <property type="entry name" value="VC0467-like domains"/>
    <property type="match status" value="1"/>
</dbReference>
<dbReference type="HAMAP" id="MF_00758">
    <property type="entry name" value="UPF0301"/>
    <property type="match status" value="1"/>
</dbReference>
<dbReference type="InterPro" id="IPR003774">
    <property type="entry name" value="AlgH-like"/>
</dbReference>
<dbReference type="NCBIfam" id="NF001266">
    <property type="entry name" value="PRK00228.1-1"/>
    <property type="match status" value="1"/>
</dbReference>
<dbReference type="PANTHER" id="PTHR30327">
    <property type="entry name" value="UNCHARACTERIZED PROTEIN YQGE"/>
    <property type="match status" value="1"/>
</dbReference>
<dbReference type="PANTHER" id="PTHR30327:SF1">
    <property type="entry name" value="UPF0301 PROTEIN YQGE"/>
    <property type="match status" value="1"/>
</dbReference>
<dbReference type="Pfam" id="PF02622">
    <property type="entry name" value="DUF179"/>
    <property type="match status" value="1"/>
</dbReference>
<dbReference type="SUPFAM" id="SSF143456">
    <property type="entry name" value="VC0467-like"/>
    <property type="match status" value="1"/>
</dbReference>
<reference key="1">
    <citation type="journal article" date="2004" name="Nat. Genet.">
        <title>Comparison of genome degradation in Paratyphi A and Typhi, human-restricted serovars of Salmonella enterica that cause typhoid.</title>
        <authorList>
            <person name="McClelland M."/>
            <person name="Sanderson K.E."/>
            <person name="Clifton S.W."/>
            <person name="Latreille P."/>
            <person name="Porwollik S."/>
            <person name="Sabo A."/>
            <person name="Meyer R."/>
            <person name="Bieri T."/>
            <person name="Ozersky P."/>
            <person name="McLellan M."/>
            <person name="Harkins C.R."/>
            <person name="Wang C."/>
            <person name="Nguyen C."/>
            <person name="Berghoff A."/>
            <person name="Elliott G."/>
            <person name="Kohlberg S."/>
            <person name="Strong C."/>
            <person name="Du F."/>
            <person name="Carter J."/>
            <person name="Kremizki C."/>
            <person name="Layman D."/>
            <person name="Leonard S."/>
            <person name="Sun H."/>
            <person name="Fulton L."/>
            <person name="Nash W."/>
            <person name="Miner T."/>
            <person name="Minx P."/>
            <person name="Delehaunty K."/>
            <person name="Fronick C."/>
            <person name="Magrini V."/>
            <person name="Nhan M."/>
            <person name="Warren W."/>
            <person name="Florea L."/>
            <person name="Spieth J."/>
            <person name="Wilson R.K."/>
        </authorList>
    </citation>
    <scope>NUCLEOTIDE SEQUENCE [LARGE SCALE GENOMIC DNA]</scope>
    <source>
        <strain>ATCC 9150 / SARB42</strain>
    </source>
</reference>
<organism>
    <name type="scientific">Salmonella paratyphi A (strain ATCC 9150 / SARB42)</name>
    <dbReference type="NCBI Taxonomy" id="295319"/>
    <lineage>
        <taxon>Bacteria</taxon>
        <taxon>Pseudomonadati</taxon>
        <taxon>Pseudomonadota</taxon>
        <taxon>Gammaproteobacteria</taxon>
        <taxon>Enterobacterales</taxon>
        <taxon>Enterobacteriaceae</taxon>
        <taxon>Salmonella</taxon>
    </lineage>
</organism>
<name>YQGE_SALPA</name>
<accession>Q5PJJ8</accession>
<proteinExistence type="inferred from homology"/>
<sequence length="187" mass="20670">MNLQHHFLIAMPALQDPIFRRSVVYICEHNQNGAMGIIVNKPLENLQIEGILEKLKITPESRDSAIRLDKAVMLGGPLAEDRGFILHTPPSRFASSIRISDNTVITTSRDVLETLGTQQQPSDVLVALGYASWDKGQLEQELLDNAWLTAPADLNILFKTPIAERWREAAKLIGIDILTMPGVAGHA</sequence>
<comment type="similarity">
    <text evidence="1">Belongs to the UPF0301 (AlgH) family.</text>
</comment>